<accession>Q6L1B9</accession>
<protein>
    <recommendedName>
        <fullName evidence="1">Protein translation factor SUI1 homolog</fullName>
    </recommendedName>
</protein>
<dbReference type="EMBL" id="AE017261">
    <property type="protein sequence ID" value="AAT43233.1"/>
    <property type="molecule type" value="Genomic_DNA"/>
</dbReference>
<dbReference type="RefSeq" id="WP_011177449.1">
    <property type="nucleotide sequence ID" value="NC_005877.1"/>
</dbReference>
<dbReference type="SMR" id="Q6L1B9"/>
<dbReference type="STRING" id="263820.PTO0648"/>
<dbReference type="PaxDb" id="263820-PTO0648"/>
<dbReference type="GeneID" id="2844429"/>
<dbReference type="KEGG" id="pto:PTO0648"/>
<dbReference type="eggNOG" id="arCOG04223">
    <property type="taxonomic scope" value="Archaea"/>
</dbReference>
<dbReference type="HOGENOM" id="CLU_082805_6_1_2"/>
<dbReference type="InParanoid" id="Q6L1B9"/>
<dbReference type="OrthoDB" id="11182at2157"/>
<dbReference type="Proteomes" id="UP000000438">
    <property type="component" value="Chromosome"/>
</dbReference>
<dbReference type="GO" id="GO:0003729">
    <property type="term" value="F:mRNA binding"/>
    <property type="evidence" value="ECO:0007669"/>
    <property type="project" value="TreeGrafter"/>
</dbReference>
<dbReference type="GO" id="GO:0003743">
    <property type="term" value="F:translation initiation factor activity"/>
    <property type="evidence" value="ECO:0007669"/>
    <property type="project" value="InterPro"/>
</dbReference>
<dbReference type="GO" id="GO:0001731">
    <property type="term" value="P:formation of translation preinitiation complex"/>
    <property type="evidence" value="ECO:0007669"/>
    <property type="project" value="TreeGrafter"/>
</dbReference>
<dbReference type="GO" id="GO:0006417">
    <property type="term" value="P:regulation of translation"/>
    <property type="evidence" value="ECO:0007669"/>
    <property type="project" value="UniProtKB-UniRule"/>
</dbReference>
<dbReference type="GO" id="GO:0002188">
    <property type="term" value="P:translation reinitiation"/>
    <property type="evidence" value="ECO:0007669"/>
    <property type="project" value="TreeGrafter"/>
</dbReference>
<dbReference type="CDD" id="cd11567">
    <property type="entry name" value="YciH_like"/>
    <property type="match status" value="1"/>
</dbReference>
<dbReference type="Gene3D" id="3.30.780.10">
    <property type="entry name" value="SUI1-like domain"/>
    <property type="match status" value="1"/>
</dbReference>
<dbReference type="HAMAP" id="MF_00604">
    <property type="entry name" value="SUI1"/>
    <property type="match status" value="1"/>
</dbReference>
<dbReference type="InterPro" id="IPR050318">
    <property type="entry name" value="DENR/SUI1_TIF"/>
</dbReference>
<dbReference type="InterPro" id="IPR001950">
    <property type="entry name" value="SUI1"/>
</dbReference>
<dbReference type="InterPro" id="IPR022851">
    <property type="entry name" value="SUI1_arc"/>
</dbReference>
<dbReference type="InterPro" id="IPR005872">
    <property type="entry name" value="SUI1_arc_bac"/>
</dbReference>
<dbReference type="InterPro" id="IPR036877">
    <property type="entry name" value="SUI1_dom_sf"/>
</dbReference>
<dbReference type="NCBIfam" id="NF002096">
    <property type="entry name" value="PRK00939.1"/>
    <property type="match status" value="1"/>
</dbReference>
<dbReference type="PANTHER" id="PTHR12789:SF0">
    <property type="entry name" value="DENSITY-REGULATED PROTEIN"/>
    <property type="match status" value="1"/>
</dbReference>
<dbReference type="PANTHER" id="PTHR12789">
    <property type="entry name" value="DENSITY-REGULATED PROTEIN HOMOLOG"/>
    <property type="match status" value="1"/>
</dbReference>
<dbReference type="Pfam" id="PF01253">
    <property type="entry name" value="SUI1"/>
    <property type="match status" value="1"/>
</dbReference>
<dbReference type="SUPFAM" id="SSF55159">
    <property type="entry name" value="eIF1-like"/>
    <property type="match status" value="1"/>
</dbReference>
<dbReference type="PROSITE" id="PS50296">
    <property type="entry name" value="SUI1"/>
    <property type="match status" value="1"/>
</dbReference>
<sequence>MKDKNFTGIPKELQPWEGFDRNNEVVKISVDKRRYGKVVTLIEGIDPKVEDINEIAKSLKKKVASGGTVKDGKIIELQGDHRETARAQLESMGFKVQMV</sequence>
<proteinExistence type="inferred from homology"/>
<name>SUI1_PICTO</name>
<comment type="similarity">
    <text evidence="1">Belongs to the SUI1 family.</text>
</comment>
<gene>
    <name type="ordered locus">PTO0648</name>
</gene>
<feature type="chain" id="PRO_0000130586" description="Protein translation factor SUI1 homolog">
    <location>
        <begin position="1"/>
        <end position="99"/>
    </location>
</feature>
<evidence type="ECO:0000255" key="1">
    <source>
        <dbReference type="HAMAP-Rule" id="MF_00604"/>
    </source>
</evidence>
<reference key="1">
    <citation type="journal article" date="2004" name="Proc. Natl. Acad. Sci. U.S.A.">
        <title>Genome sequence of Picrophilus torridus and its implications for life around pH 0.</title>
        <authorList>
            <person name="Fuetterer O."/>
            <person name="Angelov A."/>
            <person name="Liesegang H."/>
            <person name="Gottschalk G."/>
            <person name="Schleper C."/>
            <person name="Schepers B."/>
            <person name="Dock C."/>
            <person name="Antranikian G."/>
            <person name="Liebl W."/>
        </authorList>
    </citation>
    <scope>NUCLEOTIDE SEQUENCE [LARGE SCALE GENOMIC DNA]</scope>
    <source>
        <strain>ATCC 700027 / DSM 9790 / JCM 10055 / NBRC 100828 / KAW 2/3</strain>
    </source>
</reference>
<keyword id="KW-0648">Protein biosynthesis</keyword>
<keyword id="KW-0810">Translation regulation</keyword>
<organism>
    <name type="scientific">Picrophilus torridus (strain ATCC 700027 / DSM 9790 / JCM 10055 / NBRC 100828 / KAW 2/3)</name>
    <dbReference type="NCBI Taxonomy" id="1122961"/>
    <lineage>
        <taxon>Archaea</taxon>
        <taxon>Methanobacteriati</taxon>
        <taxon>Thermoplasmatota</taxon>
        <taxon>Thermoplasmata</taxon>
        <taxon>Thermoplasmatales</taxon>
        <taxon>Picrophilaceae</taxon>
        <taxon>Picrophilus</taxon>
    </lineage>
</organism>